<evidence type="ECO:0000255" key="1">
    <source>
        <dbReference type="HAMAP-Rule" id="MF_00137"/>
    </source>
</evidence>
<feature type="chain" id="PRO_0000100878" description="Phosphoribosylaminoimidazole-succinocarboxamide synthase">
    <location>
        <begin position="1"/>
        <end position="234"/>
    </location>
</feature>
<name>PUR7_STRA5</name>
<reference key="1">
    <citation type="journal article" date="2002" name="Proc. Natl. Acad. Sci. U.S.A.">
        <title>Complete genome sequence and comparative genomic analysis of an emerging human pathogen, serotype V Streptococcus agalactiae.</title>
        <authorList>
            <person name="Tettelin H."/>
            <person name="Masignani V."/>
            <person name="Cieslewicz M.J."/>
            <person name="Eisen J.A."/>
            <person name="Peterson S.N."/>
            <person name="Wessels M.R."/>
            <person name="Paulsen I.T."/>
            <person name="Nelson K.E."/>
            <person name="Margarit I."/>
            <person name="Read T.D."/>
            <person name="Madoff L.C."/>
            <person name="Wolf A.M."/>
            <person name="Beanan M.J."/>
            <person name="Brinkac L.M."/>
            <person name="Daugherty S.C."/>
            <person name="DeBoy R.T."/>
            <person name="Durkin A.S."/>
            <person name="Kolonay J.F."/>
            <person name="Madupu R."/>
            <person name="Lewis M.R."/>
            <person name="Radune D."/>
            <person name="Fedorova N.B."/>
            <person name="Scanlan D."/>
            <person name="Khouri H.M."/>
            <person name="Mulligan S."/>
            <person name="Carty H.A."/>
            <person name="Cline R.T."/>
            <person name="Van Aken S.E."/>
            <person name="Gill J."/>
            <person name="Scarselli M."/>
            <person name="Mora M."/>
            <person name="Iacobini E.T."/>
            <person name="Brettoni C."/>
            <person name="Galli G."/>
            <person name="Mariani M."/>
            <person name="Vegni F."/>
            <person name="Maione D."/>
            <person name="Rinaudo D."/>
            <person name="Rappuoli R."/>
            <person name="Telford J.L."/>
            <person name="Kasper D.L."/>
            <person name="Grandi G."/>
            <person name="Fraser C.M."/>
        </authorList>
    </citation>
    <scope>NUCLEOTIDE SEQUENCE [LARGE SCALE GENOMIC DNA]</scope>
    <source>
        <strain>ATCC BAA-611 / 2603 V/R</strain>
    </source>
</reference>
<gene>
    <name evidence="1" type="primary">purC</name>
    <name type="ordered locus">SAG0024</name>
</gene>
<protein>
    <recommendedName>
        <fullName evidence="1">Phosphoribosylaminoimidazole-succinocarboxamide synthase</fullName>
        <ecNumber evidence="1">6.3.2.6</ecNumber>
    </recommendedName>
    <alternativeName>
        <fullName evidence="1">SAICAR synthetase</fullName>
    </alternativeName>
</protein>
<comment type="catalytic activity">
    <reaction evidence="1">
        <text>5-amino-1-(5-phospho-D-ribosyl)imidazole-4-carboxylate + L-aspartate + ATP = (2S)-2-[5-amino-1-(5-phospho-beta-D-ribosyl)imidazole-4-carboxamido]succinate + ADP + phosphate + 2 H(+)</text>
        <dbReference type="Rhea" id="RHEA:22628"/>
        <dbReference type="ChEBI" id="CHEBI:15378"/>
        <dbReference type="ChEBI" id="CHEBI:29991"/>
        <dbReference type="ChEBI" id="CHEBI:30616"/>
        <dbReference type="ChEBI" id="CHEBI:43474"/>
        <dbReference type="ChEBI" id="CHEBI:58443"/>
        <dbReference type="ChEBI" id="CHEBI:77657"/>
        <dbReference type="ChEBI" id="CHEBI:456216"/>
        <dbReference type="EC" id="6.3.2.6"/>
    </reaction>
</comment>
<comment type="pathway">
    <text evidence="1">Purine metabolism; IMP biosynthesis via de novo pathway; 5-amino-1-(5-phospho-D-ribosyl)imidazole-4-carboxamide from 5-amino-1-(5-phospho-D-ribosyl)imidazole-4-carboxylate: step 1/2.</text>
</comment>
<comment type="similarity">
    <text evidence="1">Belongs to the SAICAR synthetase family.</text>
</comment>
<dbReference type="EC" id="6.3.2.6" evidence="1"/>
<dbReference type="EMBL" id="AE009948">
    <property type="protein sequence ID" value="AAM98932.1"/>
    <property type="molecule type" value="Genomic_DNA"/>
</dbReference>
<dbReference type="RefSeq" id="NP_687060.1">
    <property type="nucleotide sequence ID" value="NC_004116.1"/>
</dbReference>
<dbReference type="RefSeq" id="WP_000184494.1">
    <property type="nucleotide sequence ID" value="NC_004116.1"/>
</dbReference>
<dbReference type="SMR" id="Q8E2G4"/>
<dbReference type="STRING" id="208435.SAG0024"/>
<dbReference type="KEGG" id="sag:SAG0024"/>
<dbReference type="PATRIC" id="fig|208435.3.peg.23"/>
<dbReference type="HOGENOM" id="CLU_061495_2_0_9"/>
<dbReference type="OrthoDB" id="9801549at2"/>
<dbReference type="UniPathway" id="UPA00074">
    <property type="reaction ID" value="UER00131"/>
</dbReference>
<dbReference type="Proteomes" id="UP000000821">
    <property type="component" value="Chromosome"/>
</dbReference>
<dbReference type="GO" id="GO:0005524">
    <property type="term" value="F:ATP binding"/>
    <property type="evidence" value="ECO:0007669"/>
    <property type="project" value="UniProtKB-KW"/>
</dbReference>
<dbReference type="GO" id="GO:0004639">
    <property type="term" value="F:phosphoribosylaminoimidazolesuccinocarboxamide synthase activity"/>
    <property type="evidence" value="ECO:0007669"/>
    <property type="project" value="UniProtKB-UniRule"/>
</dbReference>
<dbReference type="GO" id="GO:0006189">
    <property type="term" value="P:'de novo' IMP biosynthetic process"/>
    <property type="evidence" value="ECO:0007669"/>
    <property type="project" value="UniProtKB-UniRule"/>
</dbReference>
<dbReference type="GO" id="GO:0009236">
    <property type="term" value="P:cobalamin biosynthetic process"/>
    <property type="evidence" value="ECO:0007669"/>
    <property type="project" value="InterPro"/>
</dbReference>
<dbReference type="CDD" id="cd01415">
    <property type="entry name" value="SAICAR_synt_PurC"/>
    <property type="match status" value="1"/>
</dbReference>
<dbReference type="FunFam" id="3.30.470.20:FF:000006">
    <property type="entry name" value="Phosphoribosylaminoimidazole-succinocarboxamide synthase"/>
    <property type="match status" value="1"/>
</dbReference>
<dbReference type="Gene3D" id="3.30.470.20">
    <property type="entry name" value="ATP-grasp fold, B domain"/>
    <property type="match status" value="1"/>
</dbReference>
<dbReference type="Gene3D" id="3.30.200.20">
    <property type="entry name" value="Phosphorylase Kinase, domain 1"/>
    <property type="match status" value="1"/>
</dbReference>
<dbReference type="HAMAP" id="MF_00137">
    <property type="entry name" value="SAICAR_synth"/>
    <property type="match status" value="1"/>
</dbReference>
<dbReference type="InterPro" id="IPR028923">
    <property type="entry name" value="SAICAR_synt/ADE2_N"/>
</dbReference>
<dbReference type="InterPro" id="IPR033934">
    <property type="entry name" value="SAICAR_synt_PurC"/>
</dbReference>
<dbReference type="InterPro" id="IPR001636">
    <property type="entry name" value="SAICAR_synth"/>
</dbReference>
<dbReference type="InterPro" id="IPR050089">
    <property type="entry name" value="SAICAR_synthetase"/>
</dbReference>
<dbReference type="InterPro" id="IPR018236">
    <property type="entry name" value="SAICAR_synthetase_CS"/>
</dbReference>
<dbReference type="NCBIfam" id="TIGR00081">
    <property type="entry name" value="purC"/>
    <property type="match status" value="1"/>
</dbReference>
<dbReference type="PANTHER" id="PTHR43599">
    <property type="entry name" value="MULTIFUNCTIONAL PROTEIN ADE2"/>
    <property type="match status" value="1"/>
</dbReference>
<dbReference type="PANTHER" id="PTHR43599:SF3">
    <property type="entry name" value="SI:DKEY-6E2.2"/>
    <property type="match status" value="1"/>
</dbReference>
<dbReference type="Pfam" id="PF01259">
    <property type="entry name" value="SAICAR_synt"/>
    <property type="match status" value="1"/>
</dbReference>
<dbReference type="SUPFAM" id="SSF56104">
    <property type="entry name" value="SAICAR synthase-like"/>
    <property type="match status" value="1"/>
</dbReference>
<dbReference type="PROSITE" id="PS01057">
    <property type="entry name" value="SAICAR_SYNTHETASE_1"/>
    <property type="match status" value="1"/>
</dbReference>
<dbReference type="PROSITE" id="PS01058">
    <property type="entry name" value="SAICAR_SYNTHETASE_2"/>
    <property type="match status" value="1"/>
</dbReference>
<sequence length="234" mass="26779">MTNQLIYTGKAKDIYSTKDENVIRTVYKDQATMLNGARKETIDGKGALNNQISSLIFEKLNMAGVVTHYIEQISKNEQLNKKVDIIPLEVVLRNVTAGSFSKRFGVEEGHVLETPIVEFYYKNDNLNDPFINDEHVKFLGIVNDEEIAYLKGETRHINELLKDWFAQIGLNLIDFKLEFGFDKDGKIILADEFSPDNCRLWDADGNHMDKDVFRRDLGSLTDVYQVVLEKLIAL</sequence>
<keyword id="KW-0067">ATP-binding</keyword>
<keyword id="KW-0436">Ligase</keyword>
<keyword id="KW-0547">Nucleotide-binding</keyword>
<keyword id="KW-0658">Purine biosynthesis</keyword>
<keyword id="KW-1185">Reference proteome</keyword>
<accession>Q8E2G4</accession>
<proteinExistence type="inferred from homology"/>
<organism>
    <name type="scientific">Streptococcus agalactiae serotype V (strain ATCC BAA-611 / 2603 V/R)</name>
    <dbReference type="NCBI Taxonomy" id="208435"/>
    <lineage>
        <taxon>Bacteria</taxon>
        <taxon>Bacillati</taxon>
        <taxon>Bacillota</taxon>
        <taxon>Bacilli</taxon>
        <taxon>Lactobacillales</taxon>
        <taxon>Streptococcaceae</taxon>
        <taxon>Streptococcus</taxon>
    </lineage>
</organism>